<dbReference type="EMBL" id="AB026653">
    <property type="protein sequence ID" value="BAB02882.1"/>
    <property type="status" value="ALT_SEQ"/>
    <property type="molecule type" value="Genomic_DNA"/>
</dbReference>
<dbReference type="EMBL" id="CP002686">
    <property type="protein sequence ID" value="AEE75753.1"/>
    <property type="molecule type" value="Genomic_DNA"/>
</dbReference>
<dbReference type="RefSeq" id="NP_188217.4">
    <property type="nucleotide sequence ID" value="NM_112466.5"/>
</dbReference>
<dbReference type="SMR" id="F4J1D9"/>
<dbReference type="FunCoup" id="F4J1D9">
    <property type="interactions" value="17"/>
</dbReference>
<dbReference type="STRING" id="3702.F4J1D9"/>
<dbReference type="PaxDb" id="3702-AT3G15960.1"/>
<dbReference type="ProteomicsDB" id="251081"/>
<dbReference type="EnsemblPlants" id="AT3G15960.1">
    <property type="protein sequence ID" value="AT3G15960.1"/>
    <property type="gene ID" value="AT3G15960"/>
</dbReference>
<dbReference type="GeneID" id="820840"/>
<dbReference type="Gramene" id="AT3G15960.1">
    <property type="protein sequence ID" value="AT3G15960.1"/>
    <property type="gene ID" value="AT3G15960"/>
</dbReference>
<dbReference type="KEGG" id="ath:AT3G15960"/>
<dbReference type="Araport" id="AT3G15960"/>
<dbReference type="TAIR" id="AT3G15960"/>
<dbReference type="HOGENOM" id="CLU_041490_0_0_1"/>
<dbReference type="InParanoid" id="F4J1D9"/>
<dbReference type="OMA" id="RLSMYRS"/>
<dbReference type="PRO" id="PR:F4J1D9"/>
<dbReference type="Proteomes" id="UP000006548">
    <property type="component" value="Chromosome 3"/>
</dbReference>
<dbReference type="ExpressionAtlas" id="F4J1D9">
    <property type="expression patterns" value="baseline and differential"/>
</dbReference>
<dbReference type="GO" id="GO:0005524">
    <property type="term" value="F:ATP binding"/>
    <property type="evidence" value="ECO:0007669"/>
    <property type="project" value="InterPro"/>
</dbReference>
<dbReference type="GO" id="GO:0030983">
    <property type="term" value="F:mismatched DNA binding"/>
    <property type="evidence" value="ECO:0007669"/>
    <property type="project" value="InterPro"/>
</dbReference>
<dbReference type="GO" id="GO:0006298">
    <property type="term" value="P:mismatch repair"/>
    <property type="evidence" value="ECO:0007669"/>
    <property type="project" value="InterPro"/>
</dbReference>
<dbReference type="InterPro" id="IPR007860">
    <property type="entry name" value="DNA_mmatch_repair_MutS_con_dom"/>
</dbReference>
<dbReference type="Pfam" id="PF05188">
    <property type="entry name" value="MutS_II"/>
    <property type="match status" value="1"/>
</dbReference>
<reference key="1">
    <citation type="journal article" date="2000" name="DNA Res.">
        <title>Structural analysis of Arabidopsis thaliana chromosome 3. I. Sequence features of the regions of 4,504,864 bp covered by sixty P1 and TAC clones.</title>
        <authorList>
            <person name="Sato S."/>
            <person name="Nakamura Y."/>
            <person name="Kaneko T."/>
            <person name="Katoh T."/>
            <person name="Asamizu E."/>
            <person name="Tabata S."/>
        </authorList>
    </citation>
    <scope>NUCLEOTIDE SEQUENCE [LARGE SCALE GENOMIC DNA]</scope>
    <source>
        <strain>cv. Columbia</strain>
    </source>
</reference>
<reference key="2">
    <citation type="journal article" date="2017" name="Plant J.">
        <title>Araport11: a complete reannotation of the Arabidopsis thaliana reference genome.</title>
        <authorList>
            <person name="Cheng C.Y."/>
            <person name="Krishnakumar V."/>
            <person name="Chan A.P."/>
            <person name="Thibaud-Nissen F."/>
            <person name="Schobel S."/>
            <person name="Town C.D."/>
        </authorList>
    </citation>
    <scope>GENOME REANNOTATION</scope>
    <source>
        <strain>cv. Columbia</strain>
    </source>
</reference>
<reference key="3">
    <citation type="journal article" date="2008" name="Plant Cell">
        <title>NAI2 is an endoplasmic reticulum body component that enables ER body formation in Arabidopsis thaliana.</title>
        <authorList>
            <person name="Yamada K."/>
            <person name="Nagano A.J."/>
            <person name="Nishina M."/>
            <person name="Hara-Nishimura I."/>
            <person name="Nishimura M."/>
        </authorList>
    </citation>
    <scope>IDENTIFICATION</scope>
    <scope>DOMAIN</scope>
    <source>
        <strain>cv. Columbia</strain>
    </source>
</reference>
<accession>F4J1D9</accession>
<accession>Q9LSB3</accession>
<feature type="signal peptide" evidence="1">
    <location>
        <begin position="1"/>
        <end position="24"/>
    </location>
</feature>
<feature type="chain" id="PRO_0000430470" description="NAI2-like protein">
    <location>
        <begin position="25"/>
        <end position="490"/>
    </location>
</feature>
<feature type="region of interest" description="Disordered" evidence="2">
    <location>
        <begin position="43"/>
        <end position="83"/>
    </location>
</feature>
<feature type="region of interest" description="Disordered" evidence="2">
    <location>
        <begin position="155"/>
        <end position="206"/>
    </location>
</feature>
<feature type="coiled-coil region" evidence="1">
    <location>
        <begin position="136"/>
        <end position="163"/>
    </location>
</feature>
<feature type="coiled-coil region" evidence="1">
    <location>
        <begin position="433"/>
        <end position="465"/>
    </location>
</feature>
<feature type="compositionally biased region" description="Basic and acidic residues" evidence="2">
    <location>
        <begin position="171"/>
        <end position="183"/>
    </location>
</feature>
<feature type="compositionally biased region" description="Low complexity" evidence="2">
    <location>
        <begin position="184"/>
        <end position="199"/>
    </location>
</feature>
<gene>
    <name type="ordered locus">At3g15960</name>
    <name type="ORF">MVC8.10</name>
</gene>
<sequence length="490" mass="54479">MGRKYVVLGLAVCLFLSSFNEVSCQAEGGIESSNSEFQGSFLEEGEVEVTKIESESQSSSSEQNTKLSMSEENQEDSFDVDKFIESEAVSSREELGQSSSMDEVNRDLEAILDSLNKRDGSDDISKVGESMDAAGIADERRQRLEDIERKLKAAAATNIVVEDGTSKRKSKVEETQEVVKFESESSSASSESRRQSSSSYNSFNKGTGGSEMLGSLGISQSGSWRCYNQDKNGVSEEEDTSIVIPKYDIDSIIKEESTSQGSSSKTSSLIASLTKIVEKHRKEKWSSGVSVSVTKGASSTQTSETVEKLKVTLKKYRGLSARELVARSDFEEILATAARYEELSSASVSHISRLSMYRSVIKEGIKASQRVQLAYARTRLLKEMAVEKQKNVDAELALVKALAERGDMLYVKIFAIKKLISKLEAEKYEVDMTFEKTVANLSRVIEEASQAYEEYHVVVRKWKEEQASEEFSREAIERVEMVWVEFLSTL</sequence>
<protein>
    <recommendedName>
        <fullName>NAI2-like protein</fullName>
    </recommendedName>
</protein>
<proteinExistence type="inferred from homology"/>
<organism>
    <name type="scientific">Arabidopsis thaliana</name>
    <name type="common">Mouse-ear cress</name>
    <dbReference type="NCBI Taxonomy" id="3702"/>
    <lineage>
        <taxon>Eukaryota</taxon>
        <taxon>Viridiplantae</taxon>
        <taxon>Streptophyta</taxon>
        <taxon>Embryophyta</taxon>
        <taxon>Tracheophyta</taxon>
        <taxon>Spermatophyta</taxon>
        <taxon>Magnoliopsida</taxon>
        <taxon>eudicotyledons</taxon>
        <taxon>Gunneridae</taxon>
        <taxon>Pentapetalae</taxon>
        <taxon>rosids</taxon>
        <taxon>malvids</taxon>
        <taxon>Brassicales</taxon>
        <taxon>Brassicaceae</taxon>
        <taxon>Camelineae</taxon>
        <taxon>Arabidopsis</taxon>
    </lineage>
</organism>
<keyword id="KW-0175">Coiled coil</keyword>
<keyword id="KW-1185">Reference proteome</keyword>
<keyword id="KW-0732">Signal</keyword>
<name>NAI2L_ARATH</name>
<comment type="domain">
    <text evidence="3">Contains a N-terminal NAI2 domain (192-490).</text>
</comment>
<comment type="sequence caution" evidence="4">
    <conflict type="erroneous gene model prediction">
        <sequence resource="EMBL-CDS" id="BAB02882"/>
    </conflict>
</comment>
<evidence type="ECO:0000255" key="1"/>
<evidence type="ECO:0000256" key="2">
    <source>
        <dbReference type="SAM" id="MobiDB-lite"/>
    </source>
</evidence>
<evidence type="ECO:0000269" key="3">
    <source>
    </source>
</evidence>
<evidence type="ECO:0000305" key="4"/>